<keyword id="KW-0963">Cytoplasm</keyword>
<keyword id="KW-0489">Methyltransferase</keyword>
<keyword id="KW-0698">rRNA processing</keyword>
<keyword id="KW-0949">S-adenosyl-L-methionine</keyword>
<keyword id="KW-0808">Transferase</keyword>
<accession>B8E6M4</accession>
<feature type="chain" id="PRO_1000185302" description="Ribosomal RNA large subunit methyltransferase E">
    <location>
        <begin position="1"/>
        <end position="209"/>
    </location>
</feature>
<feature type="active site" description="Proton acceptor" evidence="1">
    <location>
        <position position="164"/>
    </location>
</feature>
<feature type="binding site" evidence="1">
    <location>
        <position position="63"/>
    </location>
    <ligand>
        <name>S-adenosyl-L-methionine</name>
        <dbReference type="ChEBI" id="CHEBI:59789"/>
    </ligand>
</feature>
<feature type="binding site" evidence="1">
    <location>
        <position position="65"/>
    </location>
    <ligand>
        <name>S-adenosyl-L-methionine</name>
        <dbReference type="ChEBI" id="CHEBI:59789"/>
    </ligand>
</feature>
<feature type="binding site" evidence="1">
    <location>
        <position position="83"/>
    </location>
    <ligand>
        <name>S-adenosyl-L-methionine</name>
        <dbReference type="ChEBI" id="CHEBI:59789"/>
    </ligand>
</feature>
<feature type="binding site" evidence="1">
    <location>
        <position position="99"/>
    </location>
    <ligand>
        <name>S-adenosyl-L-methionine</name>
        <dbReference type="ChEBI" id="CHEBI:59789"/>
    </ligand>
</feature>
<feature type="binding site" evidence="1">
    <location>
        <position position="124"/>
    </location>
    <ligand>
        <name>S-adenosyl-L-methionine</name>
        <dbReference type="ChEBI" id="CHEBI:59789"/>
    </ligand>
</feature>
<sequence length="209" mass="23096">MSGIKRTASSNRWMLEHFDDHYVKLAQKMGLRSRAAFKLEEIQQKDQLIRPGMTVVDLGAAPGGWSQVAVKLAGDRGKVIACDILPMDPIVGVDFLQGDFREDKVLQALLTRVGDAKVDVVLSDMAPNMSGSDSVDQPRAMYLVELALDMCHQVLAPNGCFAVKVFQGEGFDEYMKAVKAVFKVVKTRKPDSSRARSREVYLVATGYKL</sequence>
<organism>
    <name type="scientific">Shewanella baltica (strain OS223)</name>
    <dbReference type="NCBI Taxonomy" id="407976"/>
    <lineage>
        <taxon>Bacteria</taxon>
        <taxon>Pseudomonadati</taxon>
        <taxon>Pseudomonadota</taxon>
        <taxon>Gammaproteobacteria</taxon>
        <taxon>Alteromonadales</taxon>
        <taxon>Shewanellaceae</taxon>
        <taxon>Shewanella</taxon>
    </lineage>
</organism>
<evidence type="ECO:0000255" key="1">
    <source>
        <dbReference type="HAMAP-Rule" id="MF_01547"/>
    </source>
</evidence>
<name>RLME_SHEB2</name>
<gene>
    <name evidence="1" type="primary">rlmE</name>
    <name evidence="1" type="synonym">ftsJ</name>
    <name evidence="1" type="synonym">rrmJ</name>
    <name type="ordered locus">Sbal223_1120</name>
</gene>
<dbReference type="EC" id="2.1.1.166" evidence="1"/>
<dbReference type="EMBL" id="CP001252">
    <property type="protein sequence ID" value="ACK45635.1"/>
    <property type="molecule type" value="Genomic_DNA"/>
</dbReference>
<dbReference type="RefSeq" id="WP_006082724.1">
    <property type="nucleotide sequence ID" value="NC_011663.1"/>
</dbReference>
<dbReference type="SMR" id="B8E6M4"/>
<dbReference type="GeneID" id="11773467"/>
<dbReference type="KEGG" id="sbp:Sbal223_1120"/>
<dbReference type="HOGENOM" id="CLU_009422_4_0_6"/>
<dbReference type="Proteomes" id="UP000002507">
    <property type="component" value="Chromosome"/>
</dbReference>
<dbReference type="GO" id="GO:0005737">
    <property type="term" value="C:cytoplasm"/>
    <property type="evidence" value="ECO:0007669"/>
    <property type="project" value="UniProtKB-SubCell"/>
</dbReference>
<dbReference type="GO" id="GO:0008650">
    <property type="term" value="F:rRNA (uridine-2'-O-)-methyltransferase activity"/>
    <property type="evidence" value="ECO:0007669"/>
    <property type="project" value="UniProtKB-UniRule"/>
</dbReference>
<dbReference type="FunFam" id="3.40.50.150:FF:000005">
    <property type="entry name" value="Ribosomal RNA large subunit methyltransferase E"/>
    <property type="match status" value="1"/>
</dbReference>
<dbReference type="Gene3D" id="3.40.50.150">
    <property type="entry name" value="Vaccinia Virus protein VP39"/>
    <property type="match status" value="1"/>
</dbReference>
<dbReference type="HAMAP" id="MF_01547">
    <property type="entry name" value="RNA_methyltr_E"/>
    <property type="match status" value="1"/>
</dbReference>
<dbReference type="InterPro" id="IPR050082">
    <property type="entry name" value="RNA_methyltr_RlmE"/>
</dbReference>
<dbReference type="InterPro" id="IPR002877">
    <property type="entry name" value="RNA_MeTrfase_FtsJ_dom"/>
</dbReference>
<dbReference type="InterPro" id="IPR015507">
    <property type="entry name" value="rRNA-MeTfrase_E"/>
</dbReference>
<dbReference type="InterPro" id="IPR029063">
    <property type="entry name" value="SAM-dependent_MTases_sf"/>
</dbReference>
<dbReference type="NCBIfam" id="NF008390">
    <property type="entry name" value="PRK11188.1"/>
    <property type="match status" value="1"/>
</dbReference>
<dbReference type="PANTHER" id="PTHR10920">
    <property type="entry name" value="RIBOSOMAL RNA METHYLTRANSFERASE"/>
    <property type="match status" value="1"/>
</dbReference>
<dbReference type="PANTHER" id="PTHR10920:SF18">
    <property type="entry name" value="RRNA METHYLTRANSFERASE 2, MITOCHONDRIAL"/>
    <property type="match status" value="1"/>
</dbReference>
<dbReference type="Pfam" id="PF01728">
    <property type="entry name" value="FtsJ"/>
    <property type="match status" value="1"/>
</dbReference>
<dbReference type="PIRSF" id="PIRSF005461">
    <property type="entry name" value="23S_rRNA_mtase"/>
    <property type="match status" value="1"/>
</dbReference>
<dbReference type="SUPFAM" id="SSF53335">
    <property type="entry name" value="S-adenosyl-L-methionine-dependent methyltransferases"/>
    <property type="match status" value="1"/>
</dbReference>
<protein>
    <recommendedName>
        <fullName evidence="1">Ribosomal RNA large subunit methyltransferase E</fullName>
        <ecNumber evidence="1">2.1.1.166</ecNumber>
    </recommendedName>
    <alternativeName>
        <fullName evidence="1">23S rRNA Um2552 methyltransferase</fullName>
    </alternativeName>
    <alternativeName>
        <fullName evidence="1">rRNA (uridine-2'-O-)-methyltransferase</fullName>
    </alternativeName>
</protein>
<proteinExistence type="inferred from homology"/>
<reference key="1">
    <citation type="submission" date="2008-12" db="EMBL/GenBank/DDBJ databases">
        <title>Complete sequence of chromosome of Shewanella baltica OS223.</title>
        <authorList>
            <consortium name="US DOE Joint Genome Institute"/>
            <person name="Lucas S."/>
            <person name="Copeland A."/>
            <person name="Lapidus A."/>
            <person name="Glavina del Rio T."/>
            <person name="Dalin E."/>
            <person name="Tice H."/>
            <person name="Bruce D."/>
            <person name="Goodwin L."/>
            <person name="Pitluck S."/>
            <person name="Chertkov O."/>
            <person name="Meincke L."/>
            <person name="Brettin T."/>
            <person name="Detter J.C."/>
            <person name="Han C."/>
            <person name="Kuske C.R."/>
            <person name="Larimer F."/>
            <person name="Land M."/>
            <person name="Hauser L."/>
            <person name="Kyrpides N."/>
            <person name="Ovchinnikova G."/>
            <person name="Brettar I."/>
            <person name="Rodrigues J."/>
            <person name="Konstantinidis K."/>
            <person name="Tiedje J."/>
        </authorList>
    </citation>
    <scope>NUCLEOTIDE SEQUENCE [LARGE SCALE GENOMIC DNA]</scope>
    <source>
        <strain>OS223</strain>
    </source>
</reference>
<comment type="function">
    <text evidence="1">Specifically methylates the uridine in position 2552 of 23S rRNA at the 2'-O position of the ribose in the fully assembled 50S ribosomal subunit.</text>
</comment>
<comment type="catalytic activity">
    <reaction evidence="1">
        <text>uridine(2552) in 23S rRNA + S-adenosyl-L-methionine = 2'-O-methyluridine(2552) in 23S rRNA + S-adenosyl-L-homocysteine + H(+)</text>
        <dbReference type="Rhea" id="RHEA:42720"/>
        <dbReference type="Rhea" id="RHEA-COMP:10202"/>
        <dbReference type="Rhea" id="RHEA-COMP:10203"/>
        <dbReference type="ChEBI" id="CHEBI:15378"/>
        <dbReference type="ChEBI" id="CHEBI:57856"/>
        <dbReference type="ChEBI" id="CHEBI:59789"/>
        <dbReference type="ChEBI" id="CHEBI:65315"/>
        <dbReference type="ChEBI" id="CHEBI:74478"/>
        <dbReference type="EC" id="2.1.1.166"/>
    </reaction>
</comment>
<comment type="subcellular location">
    <subcellularLocation>
        <location evidence="1">Cytoplasm</location>
    </subcellularLocation>
</comment>
<comment type="similarity">
    <text evidence="1">Belongs to the class I-like SAM-binding methyltransferase superfamily. RNA methyltransferase RlmE family.</text>
</comment>